<reference key="1">
    <citation type="journal article" date="2003" name="Nucleic Acids Res.">
        <title>What's in the genome of a filamentous fungus? Analysis of the Neurospora genome sequence.</title>
        <authorList>
            <person name="Mannhaupt G."/>
            <person name="Montrone C."/>
            <person name="Haase D."/>
            <person name="Mewes H.-W."/>
            <person name="Aign V."/>
            <person name="Hoheisel J.D."/>
            <person name="Fartmann B."/>
            <person name="Nyakatura G."/>
            <person name="Kempken F."/>
            <person name="Maier J."/>
            <person name="Schulte U."/>
        </authorList>
    </citation>
    <scope>NUCLEOTIDE SEQUENCE [LARGE SCALE GENOMIC DNA]</scope>
    <source>
        <strain>ATCC 24698 / 74-OR23-1A / CBS 708.71 / DSM 1257 / FGSC 987</strain>
    </source>
</reference>
<reference key="2">
    <citation type="journal article" date="2003" name="Nature">
        <title>The genome sequence of the filamentous fungus Neurospora crassa.</title>
        <authorList>
            <person name="Galagan J.E."/>
            <person name="Calvo S.E."/>
            <person name="Borkovich K.A."/>
            <person name="Selker E.U."/>
            <person name="Read N.D."/>
            <person name="Jaffe D.B."/>
            <person name="FitzHugh W."/>
            <person name="Ma L.-J."/>
            <person name="Smirnov S."/>
            <person name="Purcell S."/>
            <person name="Rehman B."/>
            <person name="Elkins T."/>
            <person name="Engels R."/>
            <person name="Wang S."/>
            <person name="Nielsen C.B."/>
            <person name="Butler J."/>
            <person name="Endrizzi M."/>
            <person name="Qui D."/>
            <person name="Ianakiev P."/>
            <person name="Bell-Pedersen D."/>
            <person name="Nelson M.A."/>
            <person name="Werner-Washburne M."/>
            <person name="Selitrennikoff C.P."/>
            <person name="Kinsey J.A."/>
            <person name="Braun E.L."/>
            <person name="Zelter A."/>
            <person name="Schulte U."/>
            <person name="Kothe G.O."/>
            <person name="Jedd G."/>
            <person name="Mewes H.-W."/>
            <person name="Staben C."/>
            <person name="Marcotte E."/>
            <person name="Greenberg D."/>
            <person name="Roy A."/>
            <person name="Foley K."/>
            <person name="Naylor J."/>
            <person name="Stange-Thomann N."/>
            <person name="Barrett R."/>
            <person name="Gnerre S."/>
            <person name="Kamal M."/>
            <person name="Kamvysselis M."/>
            <person name="Mauceli E.W."/>
            <person name="Bielke C."/>
            <person name="Rudd S."/>
            <person name="Frishman D."/>
            <person name="Krystofova S."/>
            <person name="Rasmussen C."/>
            <person name="Metzenberg R.L."/>
            <person name="Perkins D.D."/>
            <person name="Kroken S."/>
            <person name="Cogoni C."/>
            <person name="Macino G."/>
            <person name="Catcheside D.E.A."/>
            <person name="Li W."/>
            <person name="Pratt R.J."/>
            <person name="Osmani S.A."/>
            <person name="DeSouza C.P.C."/>
            <person name="Glass N.L."/>
            <person name="Orbach M.J."/>
            <person name="Berglund J.A."/>
            <person name="Voelker R."/>
            <person name="Yarden O."/>
            <person name="Plamann M."/>
            <person name="Seiler S."/>
            <person name="Dunlap J.C."/>
            <person name="Radford A."/>
            <person name="Aramayo R."/>
            <person name="Natvig D.O."/>
            <person name="Alex L.A."/>
            <person name="Mannhaupt G."/>
            <person name="Ebbole D.J."/>
            <person name="Freitag M."/>
            <person name="Paulsen I."/>
            <person name="Sachs M.S."/>
            <person name="Lander E.S."/>
            <person name="Nusbaum C."/>
            <person name="Birren B.W."/>
        </authorList>
    </citation>
    <scope>NUCLEOTIDE SEQUENCE [LARGE SCALE GENOMIC DNA]</scope>
    <source>
        <strain>ATCC 24698 / 74-OR23-1A / CBS 708.71 / DSM 1257 / FGSC 987</strain>
    </source>
</reference>
<keyword id="KW-1185">Reference proteome</keyword>
<feature type="chain" id="PRO_0000260262" description="Uncharacterized protein NCU11158">
    <location>
        <begin position="1"/>
        <end position="275"/>
    </location>
</feature>
<feature type="region of interest" description="Disordered" evidence="1">
    <location>
        <begin position="1"/>
        <end position="25"/>
    </location>
</feature>
<feature type="region of interest" description="Disordered" evidence="1">
    <location>
        <begin position="185"/>
        <end position="275"/>
    </location>
</feature>
<feature type="compositionally biased region" description="Basic and acidic residues" evidence="1">
    <location>
        <begin position="228"/>
        <end position="239"/>
    </location>
</feature>
<gene>
    <name type="ORF">B24N11.060</name>
    <name type="ORF">NCU06753</name>
    <name type="ORF">NCU11158</name>
</gene>
<protein>
    <recommendedName>
        <fullName>Uncharacterized protein NCU11158</fullName>
    </recommendedName>
</protein>
<evidence type="ECO:0000256" key="1">
    <source>
        <dbReference type="SAM" id="MobiDB-lite"/>
    </source>
</evidence>
<evidence type="ECO:0000305" key="2"/>
<dbReference type="EMBL" id="BX284751">
    <property type="protein sequence ID" value="CAD70392.1"/>
    <property type="status" value="ALT_SEQ"/>
    <property type="molecule type" value="Genomic_DNA"/>
</dbReference>
<dbReference type="EMBL" id="CM002237">
    <property type="protein sequence ID" value="EDO65070.2"/>
    <property type="molecule type" value="Genomic_DNA"/>
</dbReference>
<dbReference type="RefSeq" id="XP_001728161.2">
    <property type="nucleotide sequence ID" value="XM_001728109.2"/>
</dbReference>
<dbReference type="STRING" id="367110.Q873B8"/>
<dbReference type="PaxDb" id="5141-EFNCRP00000006899"/>
<dbReference type="EnsemblFungi" id="EDO65070">
    <property type="protein sequence ID" value="EDO65070"/>
    <property type="gene ID" value="NCU11158"/>
</dbReference>
<dbReference type="GeneID" id="5847310"/>
<dbReference type="KEGG" id="ncr:NCU11158"/>
<dbReference type="VEuPathDB" id="FungiDB:NCU11158"/>
<dbReference type="HOGENOM" id="CLU_1012265_0_0_1"/>
<dbReference type="InParanoid" id="Q873B8"/>
<dbReference type="Proteomes" id="UP000001805">
    <property type="component" value="Chromosome 6, Linkage Group II"/>
</dbReference>
<name>YB160_NEUCR</name>
<organism>
    <name type="scientific">Neurospora crassa (strain ATCC 24698 / 74-OR23-1A / CBS 708.71 / DSM 1257 / FGSC 987)</name>
    <dbReference type="NCBI Taxonomy" id="367110"/>
    <lineage>
        <taxon>Eukaryota</taxon>
        <taxon>Fungi</taxon>
        <taxon>Dikarya</taxon>
        <taxon>Ascomycota</taxon>
        <taxon>Pezizomycotina</taxon>
        <taxon>Sordariomycetes</taxon>
        <taxon>Sordariomycetidae</taxon>
        <taxon>Sordariales</taxon>
        <taxon>Sordariaceae</taxon>
        <taxon>Neurospora</taxon>
    </lineage>
</organism>
<comment type="sequence caution" evidence="2">
    <conflict type="erroneous gene model prediction">
        <sequence resource="EMBL-CDS" id="CAD70392"/>
    </conflict>
</comment>
<accession>Q873B8</accession>
<accession>A7UWW2</accession>
<accession>Q7SCC6</accession>
<sequence length="275" mass="31593">MIGGERVLLGSQKREPSNEEDDQEQLDIDLTSDGKNQRYQPAPNDTISRYHLNHIVYTLRWVIMAFKKLKTKYPPLCLSDSKMDQIAADLIRRLHVLLRREELRSEMSRGRRVSRNLTEAGRNGGLPLGLRRARRAQSAPDRTERIKFYQEMLRFVREPPMISTSLQPSPAESWDHDRFLKDWSQRGEEEETDDTKELCETYGGEVNQDSREEDQQAPAETEVIEVCKPGDGEENAKDDSEQEQAPVVTTEVIEVQSSSGSNSPDDGNEQLRHHM</sequence>
<proteinExistence type="predicted"/>